<accession>P12681</accession>
<organism>
    <name type="scientific">Salmonella typhimurium (strain LT2 / SGSC1412 / ATCC 700720)</name>
    <dbReference type="NCBI Taxonomy" id="99287"/>
    <lineage>
        <taxon>Bacteria</taxon>
        <taxon>Pseudomonadati</taxon>
        <taxon>Pseudomonadota</taxon>
        <taxon>Gammaproteobacteria</taxon>
        <taxon>Enterobacterales</taxon>
        <taxon>Enterobacteriaceae</taxon>
        <taxon>Salmonella</taxon>
    </lineage>
</organism>
<proteinExistence type="evidence at transcript level"/>
<keyword id="KW-0997">Cell inner membrane</keyword>
<keyword id="KW-1003">Cell membrane</keyword>
<keyword id="KW-0472">Membrane</keyword>
<keyword id="KW-1185">Reference proteome</keyword>
<keyword id="KW-0812">Transmembrane</keyword>
<keyword id="KW-1133">Transmembrane helix</keyword>
<keyword id="KW-0813">Transport</keyword>
<protein>
    <recommendedName>
        <fullName>Phosphoglycerate transporter protein</fullName>
    </recommendedName>
</protein>
<gene>
    <name type="primary">pgtP</name>
    <name type="ordered locus">STM2399</name>
</gene>
<feature type="chain" id="PRO_0000199880" description="Phosphoglycerate transporter protein">
    <location>
        <begin position="1"/>
        <end position="463"/>
    </location>
</feature>
<feature type="topological domain" description="Cytoplasmic" evidence="1">
    <location>
        <begin position="1"/>
        <end position="29"/>
    </location>
</feature>
<feature type="transmembrane region" description="Helical" evidence="1">
    <location>
        <begin position="30"/>
        <end position="50"/>
    </location>
</feature>
<feature type="transmembrane region" description="Helical" evidence="1">
    <location>
        <begin position="59"/>
        <end position="79"/>
    </location>
</feature>
<feature type="transmembrane region" description="Helical" evidence="1">
    <location>
        <begin position="106"/>
        <end position="126"/>
    </location>
</feature>
<feature type="transmembrane region" description="Helical" evidence="1">
    <location>
        <begin position="127"/>
        <end position="147"/>
    </location>
</feature>
<feature type="transmembrane region" description="Helical" evidence="1">
    <location>
        <begin position="160"/>
        <end position="180"/>
    </location>
</feature>
<feature type="transmembrane region" description="Helical" evidence="1">
    <location>
        <begin position="188"/>
        <end position="208"/>
    </location>
</feature>
<feature type="transmembrane region" description="Helical" evidence="1">
    <location>
        <begin position="267"/>
        <end position="287"/>
    </location>
</feature>
<feature type="transmembrane region" description="Helical" evidence="1">
    <location>
        <begin position="297"/>
        <end position="317"/>
    </location>
</feature>
<feature type="transmembrane region" description="Helical" evidence="1">
    <location>
        <begin position="326"/>
        <end position="346"/>
    </location>
</feature>
<feature type="transmembrane region" description="Helical" evidence="1">
    <location>
        <begin position="349"/>
        <end position="369"/>
    </location>
</feature>
<feature type="transmembrane region" description="Helical" evidence="1">
    <location>
        <begin position="391"/>
        <end position="411"/>
    </location>
</feature>
<feature type="transmembrane region" description="Helical" evidence="1">
    <location>
        <begin position="413"/>
        <end position="433"/>
    </location>
</feature>
<feature type="sequence conflict" description="In Ref. 2; AAA27186." evidence="2" ref="2">
    <original>L</original>
    <variation>V</variation>
    <location>
        <position position="254"/>
    </location>
</feature>
<feature type="sequence conflict" description="In Ref. 2." evidence="2" ref="2">
    <original>V</original>
    <variation>L</variation>
    <location>
        <position position="408"/>
    </location>
</feature>
<feature type="sequence conflict" description="In Ref. 2." evidence="2" ref="2">
    <original>A</original>
    <variation>G</variation>
    <location>
        <position position="440"/>
    </location>
</feature>
<evidence type="ECO:0000255" key="1"/>
<evidence type="ECO:0000305" key="2"/>
<reference key="1">
    <citation type="journal article" date="2001" name="Nature">
        <title>Complete genome sequence of Salmonella enterica serovar Typhimurium LT2.</title>
        <authorList>
            <person name="McClelland M."/>
            <person name="Sanderson K.E."/>
            <person name="Spieth J."/>
            <person name="Clifton S.W."/>
            <person name="Latreille P."/>
            <person name="Courtney L."/>
            <person name="Porwollik S."/>
            <person name="Ali J."/>
            <person name="Dante M."/>
            <person name="Du F."/>
            <person name="Hou S."/>
            <person name="Layman D."/>
            <person name="Leonard S."/>
            <person name="Nguyen C."/>
            <person name="Scott K."/>
            <person name="Holmes A."/>
            <person name="Grewal N."/>
            <person name="Mulvaney E."/>
            <person name="Ryan E."/>
            <person name="Sun H."/>
            <person name="Florea L."/>
            <person name="Miller W."/>
            <person name="Stoneking T."/>
            <person name="Nhan M."/>
            <person name="Waterston R."/>
            <person name="Wilson R.K."/>
        </authorList>
    </citation>
    <scope>NUCLEOTIDE SEQUENCE [LARGE SCALE GENOMIC DNA]</scope>
    <source>
        <strain>LT2 / SGSC1412 / ATCC 700720</strain>
    </source>
</reference>
<reference key="2">
    <citation type="journal article" date="1988" name="J. Bacteriol.">
        <title>Nucleotide sequence and transcription start point of the phosphoglycerate transporter gene of Salmonella typhimurium.</title>
        <authorList>
            <person name="Goldrick D."/>
            <person name="Yu G.-Q."/>
            <person name="Jiang S.-Q."/>
            <person name="Hong J.-S."/>
        </authorList>
    </citation>
    <scope>NUCLEOTIDE SEQUENCE [GENOMIC DNA] OF 1-458</scope>
</reference>
<name>PGTP_SALTY</name>
<dbReference type="EMBL" id="AE006468">
    <property type="protein sequence ID" value="AAL21299.1"/>
    <property type="molecule type" value="Genomic_DNA"/>
</dbReference>
<dbReference type="EMBL" id="M21278">
    <property type="protein sequence ID" value="AAA27186.1"/>
    <property type="status" value="ALT_FRAME"/>
    <property type="molecule type" value="Genomic_DNA"/>
</dbReference>
<dbReference type="PIR" id="A31089">
    <property type="entry name" value="JNEBPT"/>
</dbReference>
<dbReference type="RefSeq" id="NP_461340.1">
    <property type="nucleotide sequence ID" value="NC_003197.2"/>
</dbReference>
<dbReference type="RefSeq" id="WP_000955748.1">
    <property type="nucleotide sequence ID" value="NC_003197.2"/>
</dbReference>
<dbReference type="SMR" id="P12681"/>
<dbReference type="STRING" id="99287.STM2399"/>
<dbReference type="TCDB" id="2.A.1.4.2">
    <property type="family name" value="the major facilitator superfamily (mfs)"/>
</dbReference>
<dbReference type="PaxDb" id="99287-STM2399"/>
<dbReference type="GeneID" id="1253921"/>
<dbReference type="KEGG" id="stm:STM2399"/>
<dbReference type="PATRIC" id="fig|99287.12.peg.2538"/>
<dbReference type="HOGENOM" id="CLU_001265_31_0_6"/>
<dbReference type="OMA" id="WRIQIFA"/>
<dbReference type="PhylomeDB" id="P12681"/>
<dbReference type="BioCyc" id="SENT99287:STM2399-MONOMER"/>
<dbReference type="PHI-base" id="PHI:11265"/>
<dbReference type="Proteomes" id="UP000001014">
    <property type="component" value="Chromosome"/>
</dbReference>
<dbReference type="GO" id="GO:0005886">
    <property type="term" value="C:plasma membrane"/>
    <property type="evidence" value="ECO:0000318"/>
    <property type="project" value="GO_Central"/>
</dbReference>
<dbReference type="GO" id="GO:0061513">
    <property type="term" value="F:glucose 6-phosphate:phosphate antiporter activity"/>
    <property type="evidence" value="ECO:0000318"/>
    <property type="project" value="GO_Central"/>
</dbReference>
<dbReference type="GO" id="GO:0015760">
    <property type="term" value="P:glucose-6-phosphate transport"/>
    <property type="evidence" value="ECO:0000318"/>
    <property type="project" value="GO_Central"/>
</dbReference>
<dbReference type="GO" id="GO:0035435">
    <property type="term" value="P:phosphate ion transmembrane transport"/>
    <property type="evidence" value="ECO:0000318"/>
    <property type="project" value="GO_Central"/>
</dbReference>
<dbReference type="CDD" id="cd17345">
    <property type="entry name" value="MFS_GlpT"/>
    <property type="match status" value="1"/>
</dbReference>
<dbReference type="Gene3D" id="1.20.1250.20">
    <property type="entry name" value="MFS general substrate transporter like domains"/>
    <property type="match status" value="2"/>
</dbReference>
<dbReference type="InterPro" id="IPR011701">
    <property type="entry name" value="MFS"/>
</dbReference>
<dbReference type="InterPro" id="IPR020846">
    <property type="entry name" value="MFS_dom"/>
</dbReference>
<dbReference type="InterPro" id="IPR036259">
    <property type="entry name" value="MFS_trans_sf"/>
</dbReference>
<dbReference type="InterPro" id="IPR051337">
    <property type="entry name" value="OPA_Antiporter"/>
</dbReference>
<dbReference type="InterPro" id="IPR021159">
    <property type="entry name" value="Sugar-P_transporter_CS"/>
</dbReference>
<dbReference type="InterPro" id="IPR000849">
    <property type="entry name" value="Sugar_P_transporter"/>
</dbReference>
<dbReference type="NCBIfam" id="TIGR00881">
    <property type="entry name" value="2A0104"/>
    <property type="match status" value="1"/>
</dbReference>
<dbReference type="NCBIfam" id="NF047787">
    <property type="entry name" value="PhglyTportPgtP"/>
    <property type="match status" value="1"/>
</dbReference>
<dbReference type="PANTHER" id="PTHR43826">
    <property type="entry name" value="GLUCOSE-6-PHOSPHATE EXCHANGER SLC37A4"/>
    <property type="match status" value="1"/>
</dbReference>
<dbReference type="PANTHER" id="PTHR43826:SF6">
    <property type="entry name" value="GLYCEROL-3-PHOSPHATE TRANSPORTER"/>
    <property type="match status" value="1"/>
</dbReference>
<dbReference type="Pfam" id="PF07690">
    <property type="entry name" value="MFS_1"/>
    <property type="match status" value="1"/>
</dbReference>
<dbReference type="PIRSF" id="PIRSF002808">
    <property type="entry name" value="Hexose_phosphate_transp"/>
    <property type="match status" value="1"/>
</dbReference>
<dbReference type="SUPFAM" id="SSF103473">
    <property type="entry name" value="MFS general substrate transporter"/>
    <property type="match status" value="1"/>
</dbReference>
<dbReference type="PROSITE" id="PS00942">
    <property type="entry name" value="GLPT"/>
    <property type="match status" value="1"/>
</dbReference>
<dbReference type="PROSITE" id="PS50850">
    <property type="entry name" value="MFS"/>
    <property type="match status" value="1"/>
</dbReference>
<sequence length="463" mass="50999">MLTILKTGQSAHKVPPEKVQATYGRYRIQALLSVFLGYLAYYIVRNNFTLSTPYLKEQLDLSATQIGLLSSCMLIAYGISKGVMSSLADKASPKVFMACGLVLCAIVNVGLGFSSAFWIFAALVVFNGLFQGMGVGPSFITIANWFPRRERGRVGAFWNISHNVGGGIVAPIVGAAFAILGSEHWQSASYIVPACVAVIFALIVLVLGKGSPRKEGLPSLEQMMPEEKVVLKTKNTAKAPENMSAWQIFCTYVLRNKNAWYISLVDVFVYMVRFGMISWLPIYLLTVKHFSKEQMSVAFLFFEWAAIPSTLLAGWLSDKLFKGRRMPLAMICMALIFVCLIGYWKSESLLMVTIFAAIVGCLIYVPQFLASVQTMEIVPSFAVGSAVGLRGFMSYIFGASLGTSLFGVMVDKLGWYGGFYLLMGGIVCCILFCYLSHRGALELERQRQNALHNQDSLQLADAQ</sequence>
<comment type="function">
    <text>The phosphoglycerate transporter protein is a part of the PGT transport system. It is the membrane bound transporter for phosphoglycerate into salmonella.</text>
</comment>
<comment type="subcellular location">
    <subcellularLocation>
        <location>Cell inner membrane</location>
        <topology>Multi-pass membrane protein</topology>
    </subcellularLocation>
</comment>
<comment type="induction">
    <text>By extracellular phosphoglycerate.</text>
</comment>
<comment type="similarity">
    <text evidence="2">Belongs to the major facilitator superfamily. Organophosphate:Pi antiporter (OPA) (TC 2.A.1.4) family.</text>
</comment>
<comment type="sequence caution" evidence="2">
    <conflict type="frameshift">
        <sequence resource="EMBL-CDS" id="AAA27186"/>
    </conflict>
</comment>